<name>SEH1A_XENLA</name>
<feature type="chain" id="PRO_0000373808" description="Nucleoporin SEH1-A">
    <location>
        <begin position="1"/>
        <end position="360"/>
    </location>
</feature>
<feature type="repeat" description="WD 1">
    <location>
        <begin position="10"/>
        <end position="49"/>
    </location>
</feature>
<feature type="repeat" description="WD 2">
    <location>
        <begin position="55"/>
        <end position="96"/>
    </location>
</feature>
<feature type="repeat" description="WD 3">
    <location>
        <begin position="111"/>
        <end position="152"/>
    </location>
</feature>
<feature type="repeat" description="WD 4">
    <location>
        <begin position="160"/>
        <end position="210"/>
    </location>
</feature>
<feature type="repeat" description="WD 5">
    <location>
        <begin position="217"/>
        <end position="258"/>
    </location>
</feature>
<feature type="repeat" description="WD 6">
    <location>
        <begin position="276"/>
        <end position="315"/>
    </location>
</feature>
<dbReference type="EMBL" id="BC099027">
    <property type="protein sequence ID" value="AAH99027.1"/>
    <property type="molecule type" value="mRNA"/>
</dbReference>
<dbReference type="RefSeq" id="NP_001089593.1">
    <property type="nucleotide sequence ID" value="NM_001096124.1"/>
</dbReference>
<dbReference type="PDB" id="6LK8">
    <property type="method" value="EM"/>
    <property type="resolution" value="5.50 A"/>
    <property type="chains" value="D/d=1-322"/>
</dbReference>
<dbReference type="PDB" id="7TDZ">
    <property type="method" value="EM"/>
    <property type="resolution" value="6.90 A"/>
    <property type="chains" value="E/e=1-322"/>
</dbReference>
<dbReference type="PDB" id="7VCI">
    <property type="method" value="EM"/>
    <property type="resolution" value="8.10 A"/>
    <property type="chains" value="C/L=1-360"/>
</dbReference>
<dbReference type="PDB" id="7VOP">
    <property type="method" value="EM"/>
    <property type="resolution" value="8.70 A"/>
    <property type="chains" value="C/L=1-360"/>
</dbReference>
<dbReference type="PDBsum" id="6LK8"/>
<dbReference type="PDBsum" id="7TDZ"/>
<dbReference type="PDBsum" id="7VCI"/>
<dbReference type="PDBsum" id="7VOP"/>
<dbReference type="EMDB" id="EMD-0909"/>
<dbReference type="EMDB" id="EMD-31891"/>
<dbReference type="EMDB" id="EMD-32056"/>
<dbReference type="SMR" id="Q4FZW5"/>
<dbReference type="BioGRID" id="592431">
    <property type="interactions" value="1"/>
</dbReference>
<dbReference type="DNASU" id="734650"/>
<dbReference type="GeneID" id="734650"/>
<dbReference type="KEGG" id="xla:734650"/>
<dbReference type="AGR" id="Xenbase:XB-GENE-1015667"/>
<dbReference type="CTD" id="734650"/>
<dbReference type="Xenbase" id="XB-GENE-1015667">
    <property type="gene designation" value="seh1l.L"/>
</dbReference>
<dbReference type="OrthoDB" id="364224at2759"/>
<dbReference type="Proteomes" id="UP000186698">
    <property type="component" value="Chromosome 6L"/>
</dbReference>
<dbReference type="Bgee" id="734650">
    <property type="expression patterns" value="Expressed in blastula and 19 other cell types or tissues"/>
</dbReference>
<dbReference type="GO" id="GO:0005829">
    <property type="term" value="C:cytosol"/>
    <property type="evidence" value="ECO:0000304"/>
    <property type="project" value="Reactome"/>
</dbReference>
<dbReference type="GO" id="GO:0061700">
    <property type="term" value="C:GATOR2 complex"/>
    <property type="evidence" value="ECO:0000250"/>
    <property type="project" value="UniProtKB"/>
</dbReference>
<dbReference type="GO" id="GO:0000776">
    <property type="term" value="C:kinetochore"/>
    <property type="evidence" value="ECO:0007669"/>
    <property type="project" value="UniProtKB-KW"/>
</dbReference>
<dbReference type="GO" id="GO:0005765">
    <property type="term" value="C:lysosomal membrane"/>
    <property type="evidence" value="ECO:0000250"/>
    <property type="project" value="UniProtKB"/>
</dbReference>
<dbReference type="GO" id="GO:0031080">
    <property type="term" value="C:nuclear pore outer ring"/>
    <property type="evidence" value="ECO:0000250"/>
    <property type="project" value="UniProtKB"/>
</dbReference>
<dbReference type="GO" id="GO:0035859">
    <property type="term" value="C:Seh1-associated complex"/>
    <property type="evidence" value="ECO:0000318"/>
    <property type="project" value="GO_Central"/>
</dbReference>
<dbReference type="GO" id="GO:0005198">
    <property type="term" value="F:structural molecule activity"/>
    <property type="evidence" value="ECO:0007669"/>
    <property type="project" value="InterPro"/>
</dbReference>
<dbReference type="GO" id="GO:0051315">
    <property type="term" value="P:attachment of mitotic spindle microtubules to kinetochore"/>
    <property type="evidence" value="ECO:0000250"/>
    <property type="project" value="UniProtKB"/>
</dbReference>
<dbReference type="GO" id="GO:0051301">
    <property type="term" value="P:cell division"/>
    <property type="evidence" value="ECO:0007669"/>
    <property type="project" value="UniProtKB-KW"/>
</dbReference>
<dbReference type="GO" id="GO:0034198">
    <property type="term" value="P:cellular response to amino acid starvation"/>
    <property type="evidence" value="ECO:0000318"/>
    <property type="project" value="GO_Central"/>
</dbReference>
<dbReference type="GO" id="GO:0031669">
    <property type="term" value="P:cellular response to nutrient levels"/>
    <property type="evidence" value="ECO:0000250"/>
    <property type="project" value="UniProtKB"/>
</dbReference>
<dbReference type="GO" id="GO:0007080">
    <property type="term" value="P:mitotic metaphase chromosome alignment"/>
    <property type="evidence" value="ECO:0000250"/>
    <property type="project" value="UniProtKB"/>
</dbReference>
<dbReference type="GO" id="GO:0051028">
    <property type="term" value="P:mRNA transport"/>
    <property type="evidence" value="ECO:0007669"/>
    <property type="project" value="UniProtKB-KW"/>
</dbReference>
<dbReference type="GO" id="GO:0006999">
    <property type="term" value="P:nuclear pore organization"/>
    <property type="evidence" value="ECO:0000250"/>
    <property type="project" value="UniProtKB"/>
</dbReference>
<dbReference type="GO" id="GO:1904263">
    <property type="term" value="P:positive regulation of TORC1 signaling"/>
    <property type="evidence" value="ECO:0000250"/>
    <property type="project" value="UniProtKB"/>
</dbReference>
<dbReference type="GO" id="GO:0015031">
    <property type="term" value="P:protein transport"/>
    <property type="evidence" value="ECO:0007669"/>
    <property type="project" value="UniProtKB-KW"/>
</dbReference>
<dbReference type="FunFam" id="2.130.10.10:FF:000063">
    <property type="entry name" value="SEH1 like nucleoporin"/>
    <property type="match status" value="1"/>
</dbReference>
<dbReference type="Gene3D" id="2.130.10.10">
    <property type="entry name" value="YVTN repeat-like/Quinoprotein amine dehydrogenase"/>
    <property type="match status" value="1"/>
</dbReference>
<dbReference type="InterPro" id="IPR020472">
    <property type="entry name" value="G-protein_beta_WD-40_rep"/>
</dbReference>
<dbReference type="InterPro" id="IPR037363">
    <property type="entry name" value="Sec13/Seh1_fam"/>
</dbReference>
<dbReference type="InterPro" id="IPR015943">
    <property type="entry name" value="WD40/YVTN_repeat-like_dom_sf"/>
</dbReference>
<dbReference type="InterPro" id="IPR036322">
    <property type="entry name" value="WD40_repeat_dom_sf"/>
</dbReference>
<dbReference type="InterPro" id="IPR001680">
    <property type="entry name" value="WD40_rpt"/>
</dbReference>
<dbReference type="PANTHER" id="PTHR11024">
    <property type="entry name" value="NUCLEAR PORE COMPLEX PROTEIN SEC13 / SEH1 FAMILY MEMBER"/>
    <property type="match status" value="1"/>
</dbReference>
<dbReference type="PANTHER" id="PTHR11024:SF3">
    <property type="entry name" value="NUCLEOPORIN SEH1"/>
    <property type="match status" value="1"/>
</dbReference>
<dbReference type="Pfam" id="PF00400">
    <property type="entry name" value="WD40"/>
    <property type="match status" value="4"/>
</dbReference>
<dbReference type="PRINTS" id="PR00320">
    <property type="entry name" value="GPROTEINBRPT"/>
</dbReference>
<dbReference type="SMART" id="SM00320">
    <property type="entry name" value="WD40"/>
    <property type="match status" value="5"/>
</dbReference>
<dbReference type="SUPFAM" id="SSF50978">
    <property type="entry name" value="WD40 repeat-like"/>
    <property type="match status" value="1"/>
</dbReference>
<dbReference type="PROSITE" id="PS50082">
    <property type="entry name" value="WD_REPEATS_2"/>
    <property type="match status" value="2"/>
</dbReference>
<dbReference type="PROSITE" id="PS50294">
    <property type="entry name" value="WD_REPEATS_REGION"/>
    <property type="match status" value="2"/>
</dbReference>
<proteinExistence type="evidence at protein level"/>
<comment type="function">
    <text evidence="1">Component of the Nup107-160 subcomplex of the nuclear pore complex (NPC). The Nup107-160 subcomplex is required for the assembly of a functional NPC. The Nup107-160 subcomplex is also required for normal kinetochore microtubule attachment, mitotic progression and chromosome segregation. This subunit plays a role in recruitment of the Nup107-160 subcomplex to the kinetochore.</text>
</comment>
<comment type="function">
    <text evidence="1">As a component of the GATOR2 complex, functions as an activator of the amino acid-sensing branch of the mTORC1 signaling pathway. The GATOR2 complex indirectly activates mTORC1 through the inhibition of the GATOR1 subcomplex. GATOR2 probably acts as an E3 ubiquitin-protein ligase toward GATOR1. In the presence of abundant amino acids, the GATOR2 complex mediates ubiquitination of the NPRL2 core component of the GATOR1 complex, leading to GATOR1 inactivation. In the absence of amino acids, GATOR2 is inhibited, activating the GATOR1 complex.</text>
</comment>
<comment type="activity regulation">
    <text evidence="1">The GATOR2 complex is negatively regulated by the upstream amino acid sensors CASTOR1 and SESN2, which sequester the GATOR2 complex in absence of amino acids. In the presence of abundant amino acids, GATOR2 is released from CASTOR1 and SESN2 and activated.</text>
</comment>
<comment type="subunit">
    <text evidence="1">Component of the Nup107-160 subcomplex of the nuclear pore complex (NPC). The Nup107-160 subcomplex includes NUP160, NUP133, NUP107, NUP98, NUP85, NUP43, NUP37, SEH1 and SEC13. Component of the GATOR2 subcomplex, composed of MIOS, SEC13, SEH1L, WDR24 and WDR59. The GATOR2 complex interacts with CASTOR1 and CASTOR2; the interaction is negatively regulated by arginine. The GATOR2 complex interacts with SESN1, SESN2 and SESN3; the interaction is negatively regulated by amino acids.</text>
</comment>
<comment type="subcellular location">
    <subcellularLocation>
        <location evidence="1">Chromosome</location>
        <location evidence="1">Centromere</location>
        <location evidence="1">Kinetochore</location>
    </subcellularLocation>
    <subcellularLocation>
        <location evidence="1">Nucleus</location>
        <location evidence="1">Nuclear pore complex</location>
    </subcellularLocation>
    <subcellularLocation>
        <location evidence="1">Lysosome membrane</location>
    </subcellularLocation>
</comment>
<comment type="similarity">
    <text evidence="2">Belongs to the WD repeat SEC13 family.</text>
</comment>
<gene>
    <name type="primary">seh1l-a</name>
</gene>
<accession>Q4FZW5</accession>
<evidence type="ECO:0000250" key="1">
    <source>
        <dbReference type="UniProtKB" id="Q96EE3"/>
    </source>
</evidence>
<evidence type="ECO:0000305" key="2"/>
<reference key="1">
    <citation type="submission" date="2005-07" db="EMBL/GenBank/DDBJ databases">
        <authorList>
            <consortium name="NIH - Xenopus Gene Collection (XGC) project"/>
        </authorList>
    </citation>
    <scope>NUCLEOTIDE SEQUENCE [LARGE SCALE MRNA]</scope>
    <source>
        <tissue>Egg</tissue>
    </source>
</reference>
<organism>
    <name type="scientific">Xenopus laevis</name>
    <name type="common">African clawed frog</name>
    <dbReference type="NCBI Taxonomy" id="8355"/>
    <lineage>
        <taxon>Eukaryota</taxon>
        <taxon>Metazoa</taxon>
        <taxon>Chordata</taxon>
        <taxon>Craniata</taxon>
        <taxon>Vertebrata</taxon>
        <taxon>Euteleostomi</taxon>
        <taxon>Amphibia</taxon>
        <taxon>Batrachia</taxon>
        <taxon>Anura</taxon>
        <taxon>Pipoidea</taxon>
        <taxon>Pipidae</taxon>
        <taxon>Xenopodinae</taxon>
        <taxon>Xenopus</taxon>
        <taxon>Xenopus</taxon>
    </lineage>
</organism>
<protein>
    <recommendedName>
        <fullName evidence="2">Nucleoporin SEH1-A</fullName>
    </recommendedName>
    <alternativeName>
        <fullName evidence="2">GATOR2 complex protein SEH1-A</fullName>
    </alternativeName>
    <alternativeName>
        <fullName>Nup107-160 subcomplex subunit seh1-A</fullName>
    </alternativeName>
</protein>
<keyword id="KW-0002">3D-structure</keyword>
<keyword id="KW-0131">Cell cycle</keyword>
<keyword id="KW-0132">Cell division</keyword>
<keyword id="KW-0137">Centromere</keyword>
<keyword id="KW-0158">Chromosome</keyword>
<keyword id="KW-0159">Chromosome partition</keyword>
<keyword id="KW-0995">Kinetochore</keyword>
<keyword id="KW-0458">Lysosome</keyword>
<keyword id="KW-0472">Membrane</keyword>
<keyword id="KW-0498">Mitosis</keyword>
<keyword id="KW-0509">mRNA transport</keyword>
<keyword id="KW-0906">Nuclear pore complex</keyword>
<keyword id="KW-0539">Nucleus</keyword>
<keyword id="KW-0653">Protein transport</keyword>
<keyword id="KW-1185">Reference proteome</keyword>
<keyword id="KW-0677">Repeat</keyword>
<keyword id="KW-0811">Translocation</keyword>
<keyword id="KW-0813">Transport</keyword>
<keyword id="KW-0853">WD repeat</keyword>
<sequence>MFVARSIAADHKDLIHDVSFDFHGRRMATCSSDQSVKVWDKSENGNWHCTASWKTHSGSVWRVTWAHPEFGQVLASCSFDRTAAVWEEIVGESNDKLRGQSHWVKRTTLVDSRTSVTDVKFAPKHMGLMLATCSADGVVRIYEAPDVMNLSQWSLQHEISCKLSCSCISWNPSSSRAHSPMIAVGSDDSSPNIMGKVQIYEYNENTRKYAKAETLMSVSDPVHDIAFAPNLGRSFHILAVATKDVRIFTMKPLRKELSSSGGVTKFEIHTVAQFDNHNSQVWRVSWNITGTVLASSGDDGTVRLWKANYMDNWKCIGVLKGDGNPVGNSYQGFFGSSVGSAGQSLQNSVNGTPSSGRKHS</sequence>